<proteinExistence type="evidence at protein level"/>
<dbReference type="EC" id="2.3.1.-" evidence="3"/>
<dbReference type="SMR" id="P0DO65"/>
<dbReference type="GO" id="GO:0016407">
    <property type="term" value="F:acetyltransferase activity"/>
    <property type="evidence" value="ECO:0000314"/>
    <property type="project" value="UniProtKB"/>
</dbReference>
<dbReference type="GO" id="GO:0009821">
    <property type="term" value="P:alkaloid biosynthetic process"/>
    <property type="evidence" value="ECO:0000314"/>
    <property type="project" value="UniProtKB"/>
</dbReference>
<dbReference type="Gene3D" id="3.30.559.10">
    <property type="entry name" value="Chloramphenicol acetyltransferase-like domain"/>
    <property type="match status" value="2"/>
</dbReference>
<dbReference type="InterPro" id="IPR023213">
    <property type="entry name" value="CAT-like_dom_sf"/>
</dbReference>
<dbReference type="InterPro" id="IPR050898">
    <property type="entry name" value="Plant_acyltransferase"/>
</dbReference>
<dbReference type="PANTHER" id="PTHR31147">
    <property type="entry name" value="ACYL TRANSFERASE 4"/>
    <property type="match status" value="1"/>
</dbReference>
<dbReference type="PANTHER" id="PTHR31147:SF25">
    <property type="entry name" value="HXXXD-TYPE ACYL-TRANSFERASE FAMILY PROTEIN"/>
    <property type="match status" value="1"/>
</dbReference>
<dbReference type="Pfam" id="PF02458">
    <property type="entry name" value="Transferase"/>
    <property type="match status" value="1"/>
</dbReference>
<reference key="1">
    <citation type="journal article" date="2023" name="Sci. Adv.">
        <title>The causal mutation leading to sweetness in modern white lupin cultivars.</title>
        <authorList>
            <person name="Mancinotti D."/>
            <person name="Czepiel K."/>
            <person name="Taylor J.L."/>
            <person name="Golshadi Galehshahi H."/>
            <person name="Moeller L.A."/>
            <person name="Jensen M.K."/>
            <person name="Motawia M.S."/>
            <person name="Hufnagel B."/>
            <person name="Soriano A."/>
            <person name="Yeheyis L."/>
            <person name="Kjaerulff L."/>
            <person name="Peret B."/>
            <person name="Staerk D."/>
            <person name="Wendt T."/>
            <person name="Nelson M.N."/>
            <person name="Kroc M."/>
            <person name="Geu-Flores F."/>
        </authorList>
    </citation>
    <scope>NUCLEOTIDE SEQUENCE</scope>
    <scope>FUNCTION</scope>
    <scope>MUTAGENESIS OF ASP-35</scope>
    <scope>CATALYTIC ACTIVITY</scope>
    <scope>POLYMORPHISM</scope>
    <scope>BIOTECHNOLOGY</scope>
    <scope>PATHWAY</scope>
    <source>
        <strain>cv. Graecus</strain>
        <strain>cv. P27174</strain>
        <tissue>Leaf</tissue>
        <tissue>Stem</tissue>
    </source>
</reference>
<evidence type="ECO:0000250" key="1">
    <source>
        <dbReference type="UniProtKB" id="Q70PR7"/>
    </source>
</evidence>
<evidence type="ECO:0000250" key="2">
    <source>
        <dbReference type="UniProtKB" id="Q9M6E2"/>
    </source>
</evidence>
<evidence type="ECO:0000269" key="3">
    <source>
    </source>
</evidence>
<evidence type="ECO:0000305" key="4"/>
<evidence type="ECO:0000305" key="5">
    <source>
    </source>
</evidence>
<accession>P0DO65</accession>
<comment type="function">
    <text evidence="3">Tetrahydroanabasine acetyltransferase involved in the accumulation of quinolizidine type antinutritional alkaloids (QAs) natural products (PubMed:37540741). QAs impart a bitter taste to plants, acting as repellents and toxicants for herbivores and predators, and possess a variety of pharmacological effects, including sedative, anticonvulsant, anti-inflammatory, antiviral, antitumor, antipyretic, anti-hepatitis B, antifibrotic, antiallergic, antidiarrheal, analgesic and antimicrobial activities (PubMed:37540741). Mediates the conversion of tetrahydroanabasine into ammodendrine (PubMed:37540741).</text>
</comment>
<comment type="catalytic activity">
    <reaction evidence="3">
        <text>tetrahydroanabasine + acetyl-CoA = ammodendrine + CoA</text>
        <dbReference type="Rhea" id="RHEA:77475"/>
        <dbReference type="ChEBI" id="CHEBI:57287"/>
        <dbReference type="ChEBI" id="CHEBI:57288"/>
        <dbReference type="ChEBI" id="CHEBI:197286"/>
        <dbReference type="ChEBI" id="CHEBI:197287"/>
    </reaction>
    <physiologicalReaction direction="left-to-right" evidence="3">
        <dbReference type="Rhea" id="RHEA:77476"/>
    </physiologicalReaction>
</comment>
<comment type="pathway">
    <text evidence="3">Alkaloid biosynthesis.</text>
</comment>
<comment type="subunit">
    <text evidence="2">Monomer.</text>
</comment>
<comment type="polymorphism">
    <text evidence="3">Plants bearing the pauper allele (A-33, E-35, T-216 and S-261), present in cv. Amiga (AC A0A6A4NPZ7), produce sweet and eatable crops compared to bitter plants cv. Graecus and cv. P27174 (displayed sequence) due to the blockage of the quinolizidine alkaloids (QAs) biosynthesis pathway and subsequent accumulation of QA pathway intermediates and their derivatives.</text>
</comment>
<comment type="biotechnology">
    <text evidence="3">Disrupting the production of quinolizidine type antinutritional alkaloids (QAs) by selecting inactive tetrahydroanabasine acetyltransferase variants is a potential kick-start for the domestication of novel legume crops.</text>
</comment>
<comment type="similarity">
    <text evidence="4">Belongs to the plant acyltransferase family.</text>
</comment>
<feature type="chain" id="PRO_0000460283" description="Tetrahydroanabasine acetyltransferase">
    <location>
        <begin position="1"/>
        <end position="454"/>
    </location>
</feature>
<feature type="active site" description="Proton acceptor" evidence="1">
    <location>
        <position position="164"/>
    </location>
</feature>
<feature type="active site" description="Proton acceptor" evidence="1">
    <location>
        <position position="389"/>
    </location>
</feature>
<feature type="mutagenesis site" description="Lost activity leading to sweet plants producing reduced levels of quinolizidine alkaloids (QAs)." evidence="3">
    <original>D</original>
    <variation>E</variation>
    <location>
        <position position="35"/>
    </location>
</feature>
<keyword id="KW-0012">Acyltransferase</keyword>
<keyword id="KW-0017">Alkaloid metabolism</keyword>
<keyword id="KW-0808">Transferase</keyword>
<organism>
    <name type="scientific">Lupinus albus</name>
    <name type="common">White lupine</name>
    <name type="synonym">Lupinus termis</name>
    <dbReference type="NCBI Taxonomy" id="3870"/>
    <lineage>
        <taxon>Eukaryota</taxon>
        <taxon>Viridiplantae</taxon>
        <taxon>Streptophyta</taxon>
        <taxon>Embryophyta</taxon>
        <taxon>Tracheophyta</taxon>
        <taxon>Spermatophyta</taxon>
        <taxon>Magnoliopsida</taxon>
        <taxon>eudicotyledons</taxon>
        <taxon>Gunneridae</taxon>
        <taxon>Pentapetalae</taxon>
        <taxon>rosids</taxon>
        <taxon>fabids</taxon>
        <taxon>Fabales</taxon>
        <taxon>Fabaceae</taxon>
        <taxon>Papilionoideae</taxon>
        <taxon>50 kb inversion clade</taxon>
        <taxon>genistoids sensu lato</taxon>
        <taxon>core genistoids</taxon>
        <taxon>Genisteae</taxon>
        <taxon>Lupinus</taxon>
    </lineage>
</organism>
<name>TTHAT_LUPAL</name>
<sequence length="454" mass="50808">MAYQMASLKIEMKEVVHVKPSKPTPSIVLPLSTLDHRPYPDSIWPIVHVYQSPSNGQLDPAFVLKQALSKALVYYYPLAGKLVKQPNGKVAINCNNDGVPFLEAIANCELSSLNYLDDHDIRIAKQLVFDFHPQQDENEYPHPVSFKLTKFQCGGFTIGMSTSHIVCDGWGACKFFHAIVELASGKSEPFLKPVWERERLIGSITTQPMPNPMDEATAAVSPFLPATDVMYELFKVDKESIRRLKMSLMKEISCNESMEQGFTTFESLAAYVWRSRARALNLNNEGKTLLVFSVQVRQHMSPPLSDGYYGTAITEGQVVLTMKELNEKPLSDIVKLVKESKNVAFTGDFIKKTIDTLESNPENFNVEEGPGATLALSDWKHLGFMPNVDFGWKEPINMVPAPCNMFEYEGLCIFLSPSNHDPSMEGGVRVFISLPSVAMPKFKEEMEALKVITP</sequence>
<protein>
    <recommendedName>
        <fullName evidence="5">Tetrahydroanabasine acetyltransferase</fullName>
        <ecNumber evidence="3">2.3.1.-</ecNumber>
    </recommendedName>
</protein>